<comment type="function">
    <text evidence="1">Specifically dimethylates two adjacent adenosines (A1518 and A1519) in the loop of a conserved hairpin near the 3'-end of 16S rRNA in the 30S particle. May play a critical role in biogenesis of 30S subunits.</text>
</comment>
<comment type="catalytic activity">
    <reaction evidence="1">
        <text>adenosine(1518)/adenosine(1519) in 16S rRNA + 4 S-adenosyl-L-methionine = N(6)-dimethyladenosine(1518)/N(6)-dimethyladenosine(1519) in 16S rRNA + 4 S-adenosyl-L-homocysteine + 4 H(+)</text>
        <dbReference type="Rhea" id="RHEA:19609"/>
        <dbReference type="Rhea" id="RHEA-COMP:10232"/>
        <dbReference type="Rhea" id="RHEA-COMP:10233"/>
        <dbReference type="ChEBI" id="CHEBI:15378"/>
        <dbReference type="ChEBI" id="CHEBI:57856"/>
        <dbReference type="ChEBI" id="CHEBI:59789"/>
        <dbReference type="ChEBI" id="CHEBI:74411"/>
        <dbReference type="ChEBI" id="CHEBI:74493"/>
        <dbReference type="EC" id="2.1.1.182"/>
    </reaction>
</comment>
<comment type="subcellular location">
    <subcellularLocation>
        <location evidence="1">Cytoplasm</location>
    </subcellularLocation>
</comment>
<comment type="similarity">
    <text evidence="1">Belongs to the class I-like SAM-binding methyltransferase superfamily. rRNA adenine N(6)-methyltransferase family. RsmA subfamily.</text>
</comment>
<keyword id="KW-0963">Cytoplasm</keyword>
<keyword id="KW-0489">Methyltransferase</keyword>
<keyword id="KW-1185">Reference proteome</keyword>
<keyword id="KW-0694">RNA-binding</keyword>
<keyword id="KW-0698">rRNA processing</keyword>
<keyword id="KW-0949">S-adenosyl-L-methionine</keyword>
<keyword id="KW-0808">Transferase</keyword>
<dbReference type="EC" id="2.1.1.182" evidence="1"/>
<dbReference type="EMBL" id="CP000494">
    <property type="protein sequence ID" value="ABQ35902.1"/>
    <property type="molecule type" value="Genomic_DNA"/>
</dbReference>
<dbReference type="RefSeq" id="WP_012043907.1">
    <property type="nucleotide sequence ID" value="NC_009485.1"/>
</dbReference>
<dbReference type="SMR" id="A5EIA8"/>
<dbReference type="STRING" id="288000.BBta_3826"/>
<dbReference type="KEGG" id="bbt:BBta_3826"/>
<dbReference type="eggNOG" id="COG0030">
    <property type="taxonomic scope" value="Bacteria"/>
</dbReference>
<dbReference type="HOGENOM" id="CLU_041220_0_1_5"/>
<dbReference type="OrthoDB" id="9814755at2"/>
<dbReference type="Proteomes" id="UP000000246">
    <property type="component" value="Chromosome"/>
</dbReference>
<dbReference type="GO" id="GO:0005829">
    <property type="term" value="C:cytosol"/>
    <property type="evidence" value="ECO:0007669"/>
    <property type="project" value="TreeGrafter"/>
</dbReference>
<dbReference type="GO" id="GO:0052908">
    <property type="term" value="F:16S rRNA (adenine(1518)-N(6)/adenine(1519)-N(6))-dimethyltransferase activity"/>
    <property type="evidence" value="ECO:0007669"/>
    <property type="project" value="UniProtKB-EC"/>
</dbReference>
<dbReference type="GO" id="GO:0003723">
    <property type="term" value="F:RNA binding"/>
    <property type="evidence" value="ECO:0007669"/>
    <property type="project" value="UniProtKB-KW"/>
</dbReference>
<dbReference type="CDD" id="cd02440">
    <property type="entry name" value="AdoMet_MTases"/>
    <property type="match status" value="1"/>
</dbReference>
<dbReference type="Gene3D" id="1.10.8.100">
    <property type="entry name" value="Ribosomal RNA adenine dimethylase-like, domain 2"/>
    <property type="match status" value="1"/>
</dbReference>
<dbReference type="Gene3D" id="3.40.50.150">
    <property type="entry name" value="Vaccinia Virus protein VP39"/>
    <property type="match status" value="1"/>
</dbReference>
<dbReference type="HAMAP" id="MF_00607">
    <property type="entry name" value="16SrRNA_methyltr_A"/>
    <property type="match status" value="1"/>
</dbReference>
<dbReference type="InterPro" id="IPR001737">
    <property type="entry name" value="KsgA/Erm"/>
</dbReference>
<dbReference type="InterPro" id="IPR023165">
    <property type="entry name" value="rRNA_Ade_diMease-like_C"/>
</dbReference>
<dbReference type="InterPro" id="IPR020596">
    <property type="entry name" value="rRNA_Ade_Mease_Trfase_CS"/>
</dbReference>
<dbReference type="InterPro" id="IPR020598">
    <property type="entry name" value="rRNA_Ade_methylase_Trfase_N"/>
</dbReference>
<dbReference type="InterPro" id="IPR011530">
    <property type="entry name" value="rRNA_adenine_dimethylase"/>
</dbReference>
<dbReference type="InterPro" id="IPR029063">
    <property type="entry name" value="SAM-dependent_MTases_sf"/>
</dbReference>
<dbReference type="NCBIfam" id="TIGR00755">
    <property type="entry name" value="ksgA"/>
    <property type="match status" value="1"/>
</dbReference>
<dbReference type="PANTHER" id="PTHR11727">
    <property type="entry name" value="DIMETHYLADENOSINE TRANSFERASE"/>
    <property type="match status" value="1"/>
</dbReference>
<dbReference type="PANTHER" id="PTHR11727:SF7">
    <property type="entry name" value="DIMETHYLADENOSINE TRANSFERASE-RELATED"/>
    <property type="match status" value="1"/>
</dbReference>
<dbReference type="Pfam" id="PF00398">
    <property type="entry name" value="RrnaAD"/>
    <property type="match status" value="1"/>
</dbReference>
<dbReference type="SMART" id="SM00650">
    <property type="entry name" value="rADc"/>
    <property type="match status" value="1"/>
</dbReference>
<dbReference type="SUPFAM" id="SSF53335">
    <property type="entry name" value="S-adenosyl-L-methionine-dependent methyltransferases"/>
    <property type="match status" value="1"/>
</dbReference>
<dbReference type="PROSITE" id="PS01131">
    <property type="entry name" value="RRNA_A_DIMETH"/>
    <property type="match status" value="1"/>
</dbReference>
<dbReference type="PROSITE" id="PS51689">
    <property type="entry name" value="SAM_RNA_A_N6_MT"/>
    <property type="match status" value="1"/>
</dbReference>
<gene>
    <name evidence="1" type="primary">rsmA</name>
    <name evidence="1" type="synonym">ksgA</name>
    <name type="ordered locus">BBta_3826</name>
</gene>
<sequence length="286" mass="31464">MSAIDDLPPLREVIREHQLSARKALGQNFLLDLNLTARIARAAGPLEDATVVEIGPGPGGLTRALLALGARHVIAVEHDERAIPALQAIAERYPGRLEIVCTDARTFDVRPYLGSTKAKIVANLPYNIATHLLIGWLSAEPWPPWYDMMVLMFQREVAERIVARENEEAYGRLGVLANWRCETKILFDISPSAFVPPPKVTSSVVRLVPRTAPEPCDRRALEQVAAAAFGQRRKMLRQSLKSLPTDPARLAAAAGVDPTRRAETIPVSGFVAMARELTNSRDDNKT</sequence>
<feature type="chain" id="PRO_1000056599" description="Ribosomal RNA small subunit methyltransferase A">
    <location>
        <begin position="1"/>
        <end position="286"/>
    </location>
</feature>
<feature type="binding site" evidence="1">
    <location>
        <position position="28"/>
    </location>
    <ligand>
        <name>S-adenosyl-L-methionine</name>
        <dbReference type="ChEBI" id="CHEBI:59789"/>
    </ligand>
</feature>
<feature type="binding site" evidence="1">
    <location>
        <position position="30"/>
    </location>
    <ligand>
        <name>S-adenosyl-L-methionine</name>
        <dbReference type="ChEBI" id="CHEBI:59789"/>
    </ligand>
</feature>
<feature type="binding site" evidence="1">
    <location>
        <position position="55"/>
    </location>
    <ligand>
        <name>S-adenosyl-L-methionine</name>
        <dbReference type="ChEBI" id="CHEBI:59789"/>
    </ligand>
</feature>
<feature type="binding site" evidence="1">
    <location>
        <position position="77"/>
    </location>
    <ligand>
        <name>S-adenosyl-L-methionine</name>
        <dbReference type="ChEBI" id="CHEBI:59789"/>
    </ligand>
</feature>
<feature type="binding site" evidence="1">
    <location>
        <position position="103"/>
    </location>
    <ligand>
        <name>S-adenosyl-L-methionine</name>
        <dbReference type="ChEBI" id="CHEBI:59789"/>
    </ligand>
</feature>
<feature type="binding site" evidence="1">
    <location>
        <position position="123"/>
    </location>
    <ligand>
        <name>S-adenosyl-L-methionine</name>
        <dbReference type="ChEBI" id="CHEBI:59789"/>
    </ligand>
</feature>
<protein>
    <recommendedName>
        <fullName evidence="1">Ribosomal RNA small subunit methyltransferase A</fullName>
        <ecNumber evidence="1">2.1.1.182</ecNumber>
    </recommendedName>
    <alternativeName>
        <fullName evidence="1">16S rRNA (adenine(1518)-N(6)/adenine(1519)-N(6))-dimethyltransferase</fullName>
    </alternativeName>
    <alternativeName>
        <fullName evidence="1">16S rRNA dimethyladenosine transferase</fullName>
    </alternativeName>
    <alternativeName>
        <fullName evidence="1">16S rRNA dimethylase</fullName>
    </alternativeName>
    <alternativeName>
        <fullName evidence="1">S-adenosylmethionine-6-N', N'-adenosyl(rRNA) dimethyltransferase</fullName>
    </alternativeName>
</protein>
<reference key="1">
    <citation type="journal article" date="2007" name="Science">
        <title>Legumes symbioses: absence of nod genes in photosynthetic bradyrhizobia.</title>
        <authorList>
            <person name="Giraud E."/>
            <person name="Moulin L."/>
            <person name="Vallenet D."/>
            <person name="Barbe V."/>
            <person name="Cytryn E."/>
            <person name="Avarre J.-C."/>
            <person name="Jaubert M."/>
            <person name="Simon D."/>
            <person name="Cartieaux F."/>
            <person name="Prin Y."/>
            <person name="Bena G."/>
            <person name="Hannibal L."/>
            <person name="Fardoux J."/>
            <person name="Kojadinovic M."/>
            <person name="Vuillet L."/>
            <person name="Lajus A."/>
            <person name="Cruveiller S."/>
            <person name="Rouy Z."/>
            <person name="Mangenot S."/>
            <person name="Segurens B."/>
            <person name="Dossat C."/>
            <person name="Franck W.L."/>
            <person name="Chang W.-S."/>
            <person name="Saunders E."/>
            <person name="Bruce D."/>
            <person name="Richardson P."/>
            <person name="Normand P."/>
            <person name="Dreyfus B."/>
            <person name="Pignol D."/>
            <person name="Stacey G."/>
            <person name="Emerich D."/>
            <person name="Vermeglio A."/>
            <person name="Medigue C."/>
            <person name="Sadowsky M."/>
        </authorList>
    </citation>
    <scope>NUCLEOTIDE SEQUENCE [LARGE SCALE GENOMIC DNA]</scope>
    <source>
        <strain>BTAi1 / ATCC BAA-1182</strain>
    </source>
</reference>
<name>RSMA_BRASB</name>
<proteinExistence type="inferred from homology"/>
<accession>A5EIA8</accession>
<evidence type="ECO:0000255" key="1">
    <source>
        <dbReference type="HAMAP-Rule" id="MF_00607"/>
    </source>
</evidence>
<organism>
    <name type="scientific">Bradyrhizobium sp. (strain BTAi1 / ATCC BAA-1182)</name>
    <dbReference type="NCBI Taxonomy" id="288000"/>
    <lineage>
        <taxon>Bacteria</taxon>
        <taxon>Pseudomonadati</taxon>
        <taxon>Pseudomonadota</taxon>
        <taxon>Alphaproteobacteria</taxon>
        <taxon>Hyphomicrobiales</taxon>
        <taxon>Nitrobacteraceae</taxon>
        <taxon>Bradyrhizobium</taxon>
    </lineage>
</organism>